<proteinExistence type="inferred from homology"/>
<name>UVSE_BACCR</name>
<organism>
    <name type="scientific">Bacillus cereus (strain ATCC 14579 / DSM 31 / CCUG 7414 / JCM 2152 / NBRC 15305 / NCIMB 9373 / NCTC 2599 / NRRL B-3711)</name>
    <dbReference type="NCBI Taxonomy" id="226900"/>
    <lineage>
        <taxon>Bacteria</taxon>
        <taxon>Bacillati</taxon>
        <taxon>Bacillota</taxon>
        <taxon>Bacilli</taxon>
        <taxon>Bacillales</taxon>
        <taxon>Bacillaceae</taxon>
        <taxon>Bacillus</taxon>
        <taxon>Bacillus cereus group</taxon>
    </lineage>
</organism>
<dbReference type="EC" id="3.-.-.-" evidence="2"/>
<dbReference type="EMBL" id="AJ243712">
    <property type="protein sequence ID" value="CAB69813.1"/>
    <property type="molecule type" value="Genomic_DNA"/>
</dbReference>
<dbReference type="EMBL" id="AJ243712">
    <property type="protein sequence ID" value="CAB69814.1"/>
    <property type="status" value="ALT_INIT"/>
    <property type="molecule type" value="Genomic_DNA"/>
</dbReference>
<dbReference type="EMBL" id="AE016877">
    <property type="protein sequence ID" value="AAP12210.1"/>
    <property type="molecule type" value="Genomic_DNA"/>
</dbReference>
<dbReference type="RefSeq" id="NP_835009.1">
    <property type="nucleotide sequence ID" value="NC_004722.1"/>
</dbReference>
<dbReference type="RefSeq" id="WP_011110499.1">
    <property type="nucleotide sequence ID" value="NZ_CP138336.1"/>
</dbReference>
<dbReference type="SMR" id="Q9L4F0"/>
<dbReference type="STRING" id="226900.BC_5347"/>
<dbReference type="KEGG" id="bce:BC5347"/>
<dbReference type="PATRIC" id="fig|226900.8.peg.5521"/>
<dbReference type="HOGENOM" id="CLU_017168_0_1_9"/>
<dbReference type="OrthoDB" id="9782576at2"/>
<dbReference type="Proteomes" id="UP000001417">
    <property type="component" value="Chromosome"/>
</dbReference>
<dbReference type="GO" id="GO:0004519">
    <property type="term" value="F:endonuclease activity"/>
    <property type="evidence" value="ECO:0007669"/>
    <property type="project" value="UniProtKB-UniRule"/>
</dbReference>
<dbReference type="GO" id="GO:0006289">
    <property type="term" value="P:nucleotide-excision repair"/>
    <property type="evidence" value="ECO:0007669"/>
    <property type="project" value="InterPro"/>
</dbReference>
<dbReference type="GO" id="GO:0006290">
    <property type="term" value="P:pyrimidine dimer repair"/>
    <property type="evidence" value="ECO:0007669"/>
    <property type="project" value="UniProtKB-UniRule"/>
</dbReference>
<dbReference type="GO" id="GO:0009411">
    <property type="term" value="P:response to UV"/>
    <property type="evidence" value="ECO:0007669"/>
    <property type="project" value="InterPro"/>
</dbReference>
<dbReference type="Gene3D" id="3.20.20.150">
    <property type="entry name" value="Divalent-metal-dependent TIM barrel enzymes"/>
    <property type="match status" value="1"/>
</dbReference>
<dbReference type="HAMAP" id="MF_00606">
    <property type="entry name" value="UV_endonuclease"/>
    <property type="match status" value="1"/>
</dbReference>
<dbReference type="InterPro" id="IPR004601">
    <property type="entry name" value="UvdE"/>
</dbReference>
<dbReference type="InterPro" id="IPR023520">
    <property type="entry name" value="UvdE_bac"/>
</dbReference>
<dbReference type="InterPro" id="IPR036237">
    <property type="entry name" value="Xyl_isomerase-like_sf"/>
</dbReference>
<dbReference type="NCBIfam" id="TIGR00629">
    <property type="entry name" value="uvde"/>
    <property type="match status" value="1"/>
</dbReference>
<dbReference type="PANTHER" id="PTHR31290">
    <property type="entry name" value="UV-DAMAGE ENDONUCLEASE"/>
    <property type="match status" value="1"/>
</dbReference>
<dbReference type="PANTHER" id="PTHR31290:SF5">
    <property type="entry name" value="UV-DAMAGE ENDONUCLEASE"/>
    <property type="match status" value="1"/>
</dbReference>
<dbReference type="Pfam" id="PF03851">
    <property type="entry name" value="UvdE"/>
    <property type="match status" value="1"/>
</dbReference>
<dbReference type="SUPFAM" id="SSF51658">
    <property type="entry name" value="Xylose isomerase-like"/>
    <property type="match status" value="1"/>
</dbReference>
<accession>Q9L4F0</accession>
<accession>Q9L4E9</accession>
<feature type="chain" id="PRO_0000215032" description="UV DNA damage endonuclease">
    <location>
        <begin position="1"/>
        <end position="317"/>
    </location>
</feature>
<evidence type="ECO:0000250" key="1"/>
<evidence type="ECO:0000255" key="2">
    <source>
        <dbReference type="HAMAP-Rule" id="MF_00606"/>
    </source>
</evidence>
<evidence type="ECO:0000305" key="3"/>
<protein>
    <recommendedName>
        <fullName evidence="2">UV DNA damage endonuclease</fullName>
        <shortName evidence="2">UV-endonuclease</shortName>
        <shortName evidence="2">UVED</shortName>
        <ecNumber evidence="2">3.-.-.-</ecNumber>
    </recommendedName>
</protein>
<comment type="function">
    <text evidence="1">Component in a DNA repair pathway. Removal of UV LIGHT damaged nucleotides. Recognizes pyrimidine dimers and cleave a phosphodiester bond immediately 5' to the lesion (By similarity).</text>
</comment>
<comment type="similarity">
    <text evidence="2">Belongs to the uve1/UvsE family.</text>
</comment>
<comment type="sequence caution" evidence="3">
    <conflict type="erroneous initiation">
        <sequence resource="EMBL-CDS" id="CAB69814"/>
    </conflict>
</comment>
<keyword id="KW-0227">DNA damage</keyword>
<keyword id="KW-0228">DNA excision</keyword>
<keyword id="KW-0234">DNA repair</keyword>
<keyword id="KW-0255">Endonuclease</keyword>
<keyword id="KW-0378">Hydrolase</keyword>
<keyword id="KW-0540">Nuclease</keyword>
<keyword id="KW-1185">Reference proteome</keyword>
<gene>
    <name evidence="2" type="primary">uvsE</name>
    <name type="ordered locus">BC_5347</name>
</gene>
<reference key="1">
    <citation type="journal article" date="1999" name="Microbiology">
        <title>Sequence analysis of three Bacillus cereus loci carrying PIcR-regulated genes encoding degradative enzymes and enterotoxin.</title>
        <authorList>
            <person name="Oekstad O.A."/>
            <person name="Gominet M."/>
            <person name="Purnelle B."/>
            <person name="Rose M."/>
            <person name="Lereclus D."/>
            <person name="Kolstoe A.-B."/>
        </authorList>
    </citation>
    <scope>NUCLEOTIDE SEQUENCE [GENOMIC DNA]</scope>
</reference>
<reference key="2">
    <citation type="journal article" date="2003" name="Nature">
        <title>Genome sequence of Bacillus cereus and comparative analysis with Bacillus anthracis.</title>
        <authorList>
            <person name="Ivanova N."/>
            <person name="Sorokin A."/>
            <person name="Anderson I."/>
            <person name="Galleron N."/>
            <person name="Candelon B."/>
            <person name="Kapatral V."/>
            <person name="Bhattacharyya A."/>
            <person name="Reznik G."/>
            <person name="Mikhailova N."/>
            <person name="Lapidus A."/>
            <person name="Chu L."/>
            <person name="Mazur M."/>
            <person name="Goltsman E."/>
            <person name="Larsen N."/>
            <person name="D'Souza M."/>
            <person name="Walunas T."/>
            <person name="Grechkin Y."/>
            <person name="Pusch G."/>
            <person name="Haselkorn R."/>
            <person name="Fonstein M."/>
            <person name="Ehrlich S.D."/>
            <person name="Overbeek R."/>
            <person name="Kyrpides N.C."/>
        </authorList>
    </citation>
    <scope>NUCLEOTIDE SEQUENCE [LARGE SCALE GENOMIC DNA]</scope>
    <source>
        <strain>ATCC 14579 / DSM 31 / CCUG 7414 / JCM 2152 / NBRC 15305 / NCIMB 9373 / NCTC 2599 / NRRL B-3711</strain>
    </source>
</reference>
<sequence>MLIRFGYVSHAMALWDCSPAKTMTFTSFKKLSKQEREDKLYHVIRQNLEHTIRILHYNIAHEIPLYRLSSSIVPLATHPEVEFDYIGVFTPLWRKIGALIKEHNLRISFHPNQFTLFTSDKPHITTNAITDMTYHYKILDAIGIADSSYINIHVGGAYGNKEKAIERFHENIKKLPTHIKKQMTLENDDKTYTTAETLSICQKENIPFVFDYHHHMANLCEEPLEELLPAIFETWSHTNISPKVHISSPRSEKEFRAHAEYIDLEFIKPFLHIAKKHNHNFDIMIESKQKDLALFQLIDELSAIRGIKRISGAMLQW</sequence>